<proteinExistence type="inferred from homology"/>
<accession>B9LSR4</accession>
<protein>
    <recommendedName>
        <fullName evidence="1">Large ribosomal subunit protein uL5</fullName>
    </recommendedName>
    <alternativeName>
        <fullName evidence="2">50S ribosomal protein L5</fullName>
    </alternativeName>
</protein>
<reference key="1">
    <citation type="journal article" date="2016" name="Stand. Genomic Sci.">
        <title>Complete genome sequence of the Antarctic Halorubrum lacusprofundi type strain ACAM 34.</title>
        <authorList>
            <person name="Anderson I.J."/>
            <person name="DasSarma P."/>
            <person name="Lucas S."/>
            <person name="Copeland A."/>
            <person name="Lapidus A."/>
            <person name="Del Rio T.G."/>
            <person name="Tice H."/>
            <person name="Dalin E."/>
            <person name="Bruce D.C."/>
            <person name="Goodwin L."/>
            <person name="Pitluck S."/>
            <person name="Sims D."/>
            <person name="Brettin T.S."/>
            <person name="Detter J.C."/>
            <person name="Han C.S."/>
            <person name="Larimer F."/>
            <person name="Hauser L."/>
            <person name="Land M."/>
            <person name="Ivanova N."/>
            <person name="Richardson P."/>
            <person name="Cavicchioli R."/>
            <person name="DasSarma S."/>
            <person name="Woese C.R."/>
            <person name="Kyrpides N.C."/>
        </authorList>
    </citation>
    <scope>NUCLEOTIDE SEQUENCE [LARGE SCALE GENOMIC DNA]</scope>
    <source>
        <strain>ATCC 49239 / DSM 5036 / JCM 8891 / ACAM 34</strain>
    </source>
</reference>
<comment type="function">
    <text evidence="1">This is one of the proteins that bind and probably mediate the attachment of the 5S RNA into the large ribosomal subunit, where it forms part of the central protuberance. In the 70S ribosome it contacts protein S13 of the 30S subunit (bridge B1b), connecting the 2 subunits; this bridge is implicated in subunit movement. May contact the P site tRNA; the 5S rRNA and some of its associated proteins might help stabilize positioning of ribosome-bound tRNAs.</text>
</comment>
<comment type="subunit">
    <text evidence="1">Part of the 50S ribosomal subunit; contacts the 5S rRNA and probably tRNA. Forms a bridge to the 30S subunit in the 70S ribosome.</text>
</comment>
<comment type="similarity">
    <text evidence="1">Belongs to the universal ribosomal protein uL5 family.</text>
</comment>
<sequence>MSESESASHEMREPYLEKVVVHMGVGQGGEPLADAEEIIEEITDQQSVRTTSKRTIAEFGIRKGDPIGVKVTLRGEDAHAFLDTALELADISKSQFDDTGNLSFGVEDHTDFPSQEYDPNIGIYGLDVTTTIVRPGYRVSKRDKATASIPSKHRMTAEDATAFLETNFDVEVTE</sequence>
<evidence type="ECO:0000255" key="1">
    <source>
        <dbReference type="HAMAP-Rule" id="MF_01333"/>
    </source>
</evidence>
<evidence type="ECO:0000305" key="2"/>
<dbReference type="EMBL" id="CP001365">
    <property type="protein sequence ID" value="ACM58011.1"/>
    <property type="molecule type" value="Genomic_DNA"/>
</dbReference>
<dbReference type="RefSeq" id="WP_015911125.1">
    <property type="nucleotide sequence ID" value="NC_012029.1"/>
</dbReference>
<dbReference type="SMR" id="B9LSR4"/>
<dbReference type="GeneID" id="7400554"/>
<dbReference type="KEGG" id="hla:Hlac_2436"/>
<dbReference type="eggNOG" id="arCOG04092">
    <property type="taxonomic scope" value="Archaea"/>
</dbReference>
<dbReference type="HOGENOM" id="CLU_061015_3_0_2"/>
<dbReference type="Proteomes" id="UP000000740">
    <property type="component" value="Chromosome 1"/>
</dbReference>
<dbReference type="GO" id="GO:1990904">
    <property type="term" value="C:ribonucleoprotein complex"/>
    <property type="evidence" value="ECO:0007669"/>
    <property type="project" value="UniProtKB-KW"/>
</dbReference>
<dbReference type="GO" id="GO:0005840">
    <property type="term" value="C:ribosome"/>
    <property type="evidence" value="ECO:0007669"/>
    <property type="project" value="UniProtKB-KW"/>
</dbReference>
<dbReference type="GO" id="GO:0019843">
    <property type="term" value="F:rRNA binding"/>
    <property type="evidence" value="ECO:0007669"/>
    <property type="project" value="UniProtKB-UniRule"/>
</dbReference>
<dbReference type="GO" id="GO:0003735">
    <property type="term" value="F:structural constituent of ribosome"/>
    <property type="evidence" value="ECO:0007669"/>
    <property type="project" value="InterPro"/>
</dbReference>
<dbReference type="GO" id="GO:0000049">
    <property type="term" value="F:tRNA binding"/>
    <property type="evidence" value="ECO:0007669"/>
    <property type="project" value="UniProtKB-UniRule"/>
</dbReference>
<dbReference type="GO" id="GO:0006412">
    <property type="term" value="P:translation"/>
    <property type="evidence" value="ECO:0007669"/>
    <property type="project" value="UniProtKB-UniRule"/>
</dbReference>
<dbReference type="FunFam" id="3.30.1440.10:FF:000002">
    <property type="entry name" value="60S ribosomal protein L11"/>
    <property type="match status" value="1"/>
</dbReference>
<dbReference type="Gene3D" id="3.30.1440.10">
    <property type="match status" value="1"/>
</dbReference>
<dbReference type="HAMAP" id="MF_01333_A">
    <property type="entry name" value="Ribosomal_uL5_A"/>
    <property type="match status" value="1"/>
</dbReference>
<dbReference type="InterPro" id="IPR002132">
    <property type="entry name" value="Ribosomal_uL5"/>
</dbReference>
<dbReference type="InterPro" id="IPR022804">
    <property type="entry name" value="Ribosomal_uL5_arc"/>
</dbReference>
<dbReference type="InterPro" id="IPR031309">
    <property type="entry name" value="Ribosomal_uL5_C"/>
</dbReference>
<dbReference type="InterPro" id="IPR022803">
    <property type="entry name" value="Ribosomal_uL5_dom_sf"/>
</dbReference>
<dbReference type="InterPro" id="IPR031310">
    <property type="entry name" value="Ribosomal_uL5_N"/>
</dbReference>
<dbReference type="NCBIfam" id="NF003258">
    <property type="entry name" value="PRK04219.1"/>
    <property type="match status" value="1"/>
</dbReference>
<dbReference type="PANTHER" id="PTHR11994">
    <property type="entry name" value="60S RIBOSOMAL PROTEIN L11-RELATED"/>
    <property type="match status" value="1"/>
</dbReference>
<dbReference type="Pfam" id="PF00281">
    <property type="entry name" value="Ribosomal_L5"/>
    <property type="match status" value="1"/>
</dbReference>
<dbReference type="Pfam" id="PF00673">
    <property type="entry name" value="Ribosomal_L5_C"/>
    <property type="match status" value="1"/>
</dbReference>
<dbReference type="PIRSF" id="PIRSF002161">
    <property type="entry name" value="Ribosomal_L5"/>
    <property type="match status" value="1"/>
</dbReference>
<dbReference type="SUPFAM" id="SSF55282">
    <property type="entry name" value="RL5-like"/>
    <property type="match status" value="1"/>
</dbReference>
<feature type="chain" id="PRO_1000166136" description="Large ribosomal subunit protein uL5">
    <location>
        <begin position="1"/>
        <end position="174"/>
    </location>
</feature>
<name>RL5_HALLT</name>
<gene>
    <name evidence="1" type="primary">rpl5</name>
    <name type="ordered locus">Hlac_2436</name>
</gene>
<keyword id="KW-1185">Reference proteome</keyword>
<keyword id="KW-0687">Ribonucleoprotein</keyword>
<keyword id="KW-0689">Ribosomal protein</keyword>
<keyword id="KW-0694">RNA-binding</keyword>
<keyword id="KW-0699">rRNA-binding</keyword>
<keyword id="KW-0820">tRNA-binding</keyword>
<organism>
    <name type="scientific">Halorubrum lacusprofundi (strain ATCC 49239 / DSM 5036 / JCM 8891 / ACAM 34)</name>
    <dbReference type="NCBI Taxonomy" id="416348"/>
    <lineage>
        <taxon>Archaea</taxon>
        <taxon>Methanobacteriati</taxon>
        <taxon>Methanobacteriota</taxon>
        <taxon>Stenosarchaea group</taxon>
        <taxon>Halobacteria</taxon>
        <taxon>Halobacteriales</taxon>
        <taxon>Haloferacaceae</taxon>
        <taxon>Halorubrum</taxon>
    </lineage>
</organism>